<proteinExistence type="inferred from homology"/>
<gene>
    <name evidence="1" type="primary">folD</name>
    <name type="ordered locus">FTF0892</name>
</gene>
<name>FOLD_FRAT1</name>
<feature type="chain" id="PRO_0000268353" description="Bifunctional protein FolD">
    <location>
        <begin position="1"/>
        <end position="282"/>
    </location>
</feature>
<feature type="binding site" evidence="1">
    <location>
        <begin position="165"/>
        <end position="167"/>
    </location>
    <ligand>
        <name>NADP(+)</name>
        <dbReference type="ChEBI" id="CHEBI:58349"/>
    </ligand>
</feature>
<feature type="binding site" evidence="1">
    <location>
        <position position="231"/>
    </location>
    <ligand>
        <name>NADP(+)</name>
        <dbReference type="ChEBI" id="CHEBI:58349"/>
    </ligand>
</feature>
<comment type="function">
    <text evidence="1">Catalyzes the oxidation of 5,10-methylenetetrahydrofolate to 5,10-methenyltetrahydrofolate and then the hydrolysis of 5,10-methenyltetrahydrofolate to 10-formyltetrahydrofolate.</text>
</comment>
<comment type="catalytic activity">
    <reaction evidence="1">
        <text>(6R)-5,10-methylene-5,6,7,8-tetrahydrofolate + NADP(+) = (6R)-5,10-methenyltetrahydrofolate + NADPH</text>
        <dbReference type="Rhea" id="RHEA:22812"/>
        <dbReference type="ChEBI" id="CHEBI:15636"/>
        <dbReference type="ChEBI" id="CHEBI:57455"/>
        <dbReference type="ChEBI" id="CHEBI:57783"/>
        <dbReference type="ChEBI" id="CHEBI:58349"/>
        <dbReference type="EC" id="1.5.1.5"/>
    </reaction>
</comment>
<comment type="catalytic activity">
    <reaction evidence="1">
        <text>(6R)-5,10-methenyltetrahydrofolate + H2O = (6R)-10-formyltetrahydrofolate + H(+)</text>
        <dbReference type="Rhea" id="RHEA:23700"/>
        <dbReference type="ChEBI" id="CHEBI:15377"/>
        <dbReference type="ChEBI" id="CHEBI:15378"/>
        <dbReference type="ChEBI" id="CHEBI:57455"/>
        <dbReference type="ChEBI" id="CHEBI:195366"/>
        <dbReference type="EC" id="3.5.4.9"/>
    </reaction>
</comment>
<comment type="pathway">
    <text evidence="1">One-carbon metabolism; tetrahydrofolate interconversion.</text>
</comment>
<comment type="subunit">
    <text evidence="1">Homodimer.</text>
</comment>
<comment type="similarity">
    <text evidence="1">Belongs to the tetrahydrofolate dehydrogenase/cyclohydrolase family.</text>
</comment>
<reference key="1">
    <citation type="journal article" date="2007" name="PLoS ONE">
        <title>Genome sequencing shows that European isolates of Francisella tularensis subspecies tularensis are almost identical to US laboratory strain Schu S4.</title>
        <authorList>
            <person name="Chaudhuri R.R."/>
            <person name="Ren C.-P."/>
            <person name="Desmond L."/>
            <person name="Vincent G.A."/>
            <person name="Silman N.J."/>
            <person name="Brehm J.K."/>
            <person name="Elmore M.J."/>
            <person name="Hudson M.J."/>
            <person name="Forsman M."/>
            <person name="Isherwood K.E."/>
            <person name="Gurycova D."/>
            <person name="Minton N.P."/>
            <person name="Titball R.W."/>
            <person name="Pallen M.J."/>
            <person name="Vipond R."/>
        </authorList>
    </citation>
    <scope>NUCLEOTIDE SEQUENCE [LARGE SCALE GENOMIC DNA]</scope>
    <source>
        <strain>FSC 198</strain>
    </source>
</reference>
<organism>
    <name type="scientific">Francisella tularensis subsp. tularensis (strain FSC 198)</name>
    <dbReference type="NCBI Taxonomy" id="393115"/>
    <lineage>
        <taxon>Bacteria</taxon>
        <taxon>Pseudomonadati</taxon>
        <taxon>Pseudomonadota</taxon>
        <taxon>Gammaproteobacteria</taxon>
        <taxon>Thiotrichales</taxon>
        <taxon>Francisellaceae</taxon>
        <taxon>Francisella</taxon>
    </lineage>
</organism>
<sequence length="282" mass="30454">MILIDGKSLSKDLKERLATQVQEYKHHTAITPKLVAIIVGNDPASKTYVASKEKACAQVGIDSQVITLPEHTTESELLELIDQLNNDSSVHAILVQLPLPAHINKNNVIYSIKPEKDVDGFHPTNVGRLQLRDKKCLESCTPKGIMTMLREYGIKTEGAYAVVVGASNVVGKPVSQLLLNAKATVTTCHRFTTDLKSHTTKADILIVAVGKPNFITADMVKEGAVVIDVGINHVDGKIVGDVDFAAVKDKVAAITPVPGGVGPMTITELLYNTFQCAQELNR</sequence>
<protein>
    <recommendedName>
        <fullName evidence="1">Bifunctional protein FolD</fullName>
    </recommendedName>
    <domain>
        <recommendedName>
            <fullName evidence="1">Methylenetetrahydrofolate dehydrogenase</fullName>
            <ecNumber evidence="1">1.5.1.5</ecNumber>
        </recommendedName>
    </domain>
    <domain>
        <recommendedName>
            <fullName evidence="1">Methenyltetrahydrofolate cyclohydrolase</fullName>
            <ecNumber evidence="1">3.5.4.9</ecNumber>
        </recommendedName>
    </domain>
</protein>
<accession>Q14HV5</accession>
<keyword id="KW-0028">Amino-acid biosynthesis</keyword>
<keyword id="KW-0368">Histidine biosynthesis</keyword>
<keyword id="KW-0378">Hydrolase</keyword>
<keyword id="KW-0486">Methionine biosynthesis</keyword>
<keyword id="KW-0511">Multifunctional enzyme</keyword>
<keyword id="KW-0521">NADP</keyword>
<keyword id="KW-0554">One-carbon metabolism</keyword>
<keyword id="KW-0560">Oxidoreductase</keyword>
<keyword id="KW-0658">Purine biosynthesis</keyword>
<dbReference type="EC" id="1.5.1.5" evidence="1"/>
<dbReference type="EC" id="3.5.4.9" evidence="1"/>
<dbReference type="EMBL" id="AM286280">
    <property type="protein sequence ID" value="CAL08908.1"/>
    <property type="molecule type" value="Genomic_DNA"/>
</dbReference>
<dbReference type="RefSeq" id="WP_003020886.1">
    <property type="nucleotide sequence ID" value="NC_008245.1"/>
</dbReference>
<dbReference type="SMR" id="Q14HV5"/>
<dbReference type="KEGG" id="ftf:FTF0892"/>
<dbReference type="HOGENOM" id="CLU_034045_2_1_6"/>
<dbReference type="UniPathway" id="UPA00193"/>
<dbReference type="GO" id="GO:0005829">
    <property type="term" value="C:cytosol"/>
    <property type="evidence" value="ECO:0007669"/>
    <property type="project" value="TreeGrafter"/>
</dbReference>
<dbReference type="GO" id="GO:0004477">
    <property type="term" value="F:methenyltetrahydrofolate cyclohydrolase activity"/>
    <property type="evidence" value="ECO:0007669"/>
    <property type="project" value="UniProtKB-UniRule"/>
</dbReference>
<dbReference type="GO" id="GO:0004488">
    <property type="term" value="F:methylenetetrahydrofolate dehydrogenase (NADP+) activity"/>
    <property type="evidence" value="ECO:0007669"/>
    <property type="project" value="UniProtKB-UniRule"/>
</dbReference>
<dbReference type="GO" id="GO:0000105">
    <property type="term" value="P:L-histidine biosynthetic process"/>
    <property type="evidence" value="ECO:0007669"/>
    <property type="project" value="UniProtKB-KW"/>
</dbReference>
<dbReference type="GO" id="GO:0009086">
    <property type="term" value="P:methionine biosynthetic process"/>
    <property type="evidence" value="ECO:0007669"/>
    <property type="project" value="UniProtKB-KW"/>
</dbReference>
<dbReference type="GO" id="GO:0006164">
    <property type="term" value="P:purine nucleotide biosynthetic process"/>
    <property type="evidence" value="ECO:0007669"/>
    <property type="project" value="UniProtKB-KW"/>
</dbReference>
<dbReference type="GO" id="GO:0035999">
    <property type="term" value="P:tetrahydrofolate interconversion"/>
    <property type="evidence" value="ECO:0007669"/>
    <property type="project" value="UniProtKB-UniRule"/>
</dbReference>
<dbReference type="CDD" id="cd01080">
    <property type="entry name" value="NAD_bind_m-THF_DH_Cyclohyd"/>
    <property type="match status" value="1"/>
</dbReference>
<dbReference type="FunFam" id="3.40.50.10860:FF:000001">
    <property type="entry name" value="Bifunctional protein FolD"/>
    <property type="match status" value="1"/>
</dbReference>
<dbReference type="FunFam" id="3.40.50.720:FF:000094">
    <property type="entry name" value="Bifunctional protein FolD"/>
    <property type="match status" value="1"/>
</dbReference>
<dbReference type="Gene3D" id="3.40.50.10860">
    <property type="entry name" value="Leucine Dehydrogenase, chain A, domain 1"/>
    <property type="match status" value="1"/>
</dbReference>
<dbReference type="Gene3D" id="3.40.50.720">
    <property type="entry name" value="NAD(P)-binding Rossmann-like Domain"/>
    <property type="match status" value="1"/>
</dbReference>
<dbReference type="HAMAP" id="MF_01576">
    <property type="entry name" value="THF_DHG_CYH"/>
    <property type="match status" value="1"/>
</dbReference>
<dbReference type="InterPro" id="IPR046346">
    <property type="entry name" value="Aminoacid_DH-like_N_sf"/>
</dbReference>
<dbReference type="InterPro" id="IPR036291">
    <property type="entry name" value="NAD(P)-bd_dom_sf"/>
</dbReference>
<dbReference type="InterPro" id="IPR000672">
    <property type="entry name" value="THF_DH/CycHdrlase"/>
</dbReference>
<dbReference type="InterPro" id="IPR020630">
    <property type="entry name" value="THF_DH/CycHdrlase_cat_dom"/>
</dbReference>
<dbReference type="InterPro" id="IPR020867">
    <property type="entry name" value="THF_DH/CycHdrlase_CS"/>
</dbReference>
<dbReference type="InterPro" id="IPR020631">
    <property type="entry name" value="THF_DH/CycHdrlase_NAD-bd_dom"/>
</dbReference>
<dbReference type="NCBIfam" id="NF008058">
    <property type="entry name" value="PRK10792.1"/>
    <property type="match status" value="1"/>
</dbReference>
<dbReference type="NCBIfam" id="NF010777">
    <property type="entry name" value="PRK14180.1"/>
    <property type="match status" value="1"/>
</dbReference>
<dbReference type="NCBIfam" id="NF010783">
    <property type="entry name" value="PRK14186.1"/>
    <property type="match status" value="1"/>
</dbReference>
<dbReference type="PANTHER" id="PTHR48099:SF5">
    <property type="entry name" value="C-1-TETRAHYDROFOLATE SYNTHASE, CYTOPLASMIC"/>
    <property type="match status" value="1"/>
</dbReference>
<dbReference type="PANTHER" id="PTHR48099">
    <property type="entry name" value="C-1-TETRAHYDROFOLATE SYNTHASE, CYTOPLASMIC-RELATED"/>
    <property type="match status" value="1"/>
</dbReference>
<dbReference type="Pfam" id="PF00763">
    <property type="entry name" value="THF_DHG_CYH"/>
    <property type="match status" value="1"/>
</dbReference>
<dbReference type="Pfam" id="PF02882">
    <property type="entry name" value="THF_DHG_CYH_C"/>
    <property type="match status" value="1"/>
</dbReference>
<dbReference type="PRINTS" id="PR00085">
    <property type="entry name" value="THFDHDRGNASE"/>
</dbReference>
<dbReference type="SUPFAM" id="SSF53223">
    <property type="entry name" value="Aminoacid dehydrogenase-like, N-terminal domain"/>
    <property type="match status" value="1"/>
</dbReference>
<dbReference type="SUPFAM" id="SSF51735">
    <property type="entry name" value="NAD(P)-binding Rossmann-fold domains"/>
    <property type="match status" value="1"/>
</dbReference>
<dbReference type="PROSITE" id="PS00766">
    <property type="entry name" value="THF_DHG_CYH_1"/>
    <property type="match status" value="1"/>
</dbReference>
<dbReference type="PROSITE" id="PS00767">
    <property type="entry name" value="THF_DHG_CYH_2"/>
    <property type="match status" value="1"/>
</dbReference>
<evidence type="ECO:0000255" key="1">
    <source>
        <dbReference type="HAMAP-Rule" id="MF_01576"/>
    </source>
</evidence>